<protein>
    <recommendedName>
        <fullName>CKLF-like MARVEL transmembrane domain-containing protein 4</fullName>
    </recommendedName>
    <alternativeName>
        <fullName>Chemokine-like factor superfamily member 4</fullName>
    </alternativeName>
</protein>
<evidence type="ECO:0000255" key="1"/>
<evidence type="ECO:0000255" key="2">
    <source>
        <dbReference type="PROSITE-ProRule" id="PRU00581"/>
    </source>
</evidence>
<evidence type="ECO:0000256" key="3">
    <source>
        <dbReference type="SAM" id="MobiDB-lite"/>
    </source>
</evidence>
<evidence type="ECO:0000269" key="4">
    <source>
    </source>
</evidence>
<evidence type="ECO:0000269" key="5">
    <source>
    </source>
</evidence>
<evidence type="ECO:0000303" key="6">
    <source>
    </source>
</evidence>
<evidence type="ECO:0000303" key="7">
    <source>
    </source>
</evidence>
<evidence type="ECO:0000303" key="8">
    <source ref="1"/>
</evidence>
<evidence type="ECO:0000305" key="9"/>
<evidence type="ECO:0000312" key="10">
    <source>
        <dbReference type="HGNC" id="HGNC:19175"/>
    </source>
</evidence>
<evidence type="ECO:0007744" key="11">
    <source>
    </source>
</evidence>
<accession>Q8IZR5</accession>
<accession>Q52M40</accession>
<accession>Q8IZR4</accession>
<accession>Q8IZV1</accession>
<feature type="chain" id="PRO_0000186103" description="CKLF-like MARVEL transmembrane domain-containing protein 4">
    <location>
        <begin position="1"/>
        <end position="234"/>
    </location>
</feature>
<feature type="transmembrane region" description="Helical" evidence="1">
    <location>
        <begin position="59"/>
        <end position="79"/>
    </location>
</feature>
<feature type="transmembrane region" description="Helical" evidence="1">
    <location>
        <begin position="85"/>
        <end position="105"/>
    </location>
</feature>
<feature type="transmembrane region" description="Helical" evidence="1">
    <location>
        <begin position="123"/>
        <end position="143"/>
    </location>
</feature>
<feature type="transmembrane region" description="Helical" evidence="1">
    <location>
        <begin position="151"/>
        <end position="171"/>
    </location>
</feature>
<feature type="domain" description="MARVEL" evidence="2">
    <location>
        <begin position="49"/>
        <end position="176"/>
    </location>
</feature>
<feature type="region of interest" description="Disordered" evidence="3">
    <location>
        <begin position="1"/>
        <end position="38"/>
    </location>
</feature>
<feature type="compositionally biased region" description="Acidic residues" evidence="3">
    <location>
        <begin position="1"/>
        <end position="11"/>
    </location>
</feature>
<feature type="compositionally biased region" description="Low complexity" evidence="3">
    <location>
        <begin position="15"/>
        <end position="25"/>
    </location>
</feature>
<feature type="modified residue" description="Phosphoserine" evidence="11">
    <location>
        <position position="194"/>
    </location>
</feature>
<feature type="splice variant" id="VSP_008260" description="In isoform 3." evidence="8">
    <location>
        <begin position="34"/>
        <end position="62"/>
    </location>
</feature>
<feature type="splice variant" id="VSP_008261" description="In isoform 2 and isoform 3." evidence="6 7 8">
    <location>
        <begin position="209"/>
        <end position="234"/>
    </location>
</feature>
<dbReference type="EMBL" id="AF521889">
    <property type="protein sequence ID" value="AAN73845.1"/>
    <property type="molecule type" value="mRNA"/>
</dbReference>
<dbReference type="EMBL" id="AF521890">
    <property type="protein sequence ID" value="AAN73846.1"/>
    <property type="molecule type" value="mRNA"/>
</dbReference>
<dbReference type="EMBL" id="AF479814">
    <property type="protein sequence ID" value="AAN73436.1"/>
    <property type="molecule type" value="mRNA"/>
</dbReference>
<dbReference type="EMBL" id="BC093679">
    <property type="protein sequence ID" value="AAH93679.1"/>
    <property type="molecule type" value="mRNA"/>
</dbReference>
<dbReference type="CCDS" id="CCDS10817.1">
    <molecule id="Q8IZR5-1"/>
</dbReference>
<dbReference type="CCDS" id="CCDS42170.1">
    <molecule id="Q8IZR5-2"/>
</dbReference>
<dbReference type="RefSeq" id="NP_848933.1">
    <molecule id="Q8IZR5-1"/>
    <property type="nucleotide sequence ID" value="NM_178818.3"/>
</dbReference>
<dbReference type="RefSeq" id="NP_852662.1">
    <molecule id="Q8IZR5-2"/>
    <property type="nucleotide sequence ID" value="NM_181521.3"/>
</dbReference>
<dbReference type="RefSeq" id="XP_011521184.1">
    <molecule id="Q8IZR5-3"/>
    <property type="nucleotide sequence ID" value="XM_011522882.2"/>
</dbReference>
<dbReference type="RefSeq" id="XP_054235631.1">
    <molecule id="Q8IZR5-3"/>
    <property type="nucleotide sequence ID" value="XM_054379656.1"/>
</dbReference>
<dbReference type="SMR" id="Q8IZR5"/>
<dbReference type="BioGRID" id="126972">
    <property type="interactions" value="36"/>
</dbReference>
<dbReference type="CORUM" id="Q8IZR5"/>
<dbReference type="FunCoup" id="Q8IZR5">
    <property type="interactions" value="464"/>
</dbReference>
<dbReference type="IntAct" id="Q8IZR5">
    <property type="interactions" value="32"/>
</dbReference>
<dbReference type="STRING" id="9606.ENSP00000333833"/>
<dbReference type="TCDB" id="1.A.64.4.4">
    <property type="family name" value="the plasmolipin (plasmolipin) family"/>
</dbReference>
<dbReference type="iPTMnet" id="Q8IZR5"/>
<dbReference type="PhosphoSitePlus" id="Q8IZR5"/>
<dbReference type="SwissPalm" id="Q8IZR5"/>
<dbReference type="BioMuta" id="CMTM4"/>
<dbReference type="DMDM" id="34921813"/>
<dbReference type="jPOST" id="Q8IZR5"/>
<dbReference type="MassIVE" id="Q8IZR5"/>
<dbReference type="PaxDb" id="9606-ENSP00000333833"/>
<dbReference type="PeptideAtlas" id="Q8IZR5"/>
<dbReference type="ProteomicsDB" id="71410">
    <molecule id="Q8IZR5-1"/>
</dbReference>
<dbReference type="ProteomicsDB" id="71411">
    <molecule id="Q8IZR5-2"/>
</dbReference>
<dbReference type="ProteomicsDB" id="71412">
    <molecule id="Q8IZR5-3"/>
</dbReference>
<dbReference type="Pumba" id="Q8IZR5"/>
<dbReference type="Antibodypedia" id="15544">
    <property type="antibodies" value="146 antibodies from 26 providers"/>
</dbReference>
<dbReference type="DNASU" id="146223"/>
<dbReference type="Ensembl" id="ENST00000330687.8">
    <molecule id="Q8IZR5-1"/>
    <property type="protein sequence ID" value="ENSP00000333833.4"/>
    <property type="gene ID" value="ENSG00000183723.13"/>
</dbReference>
<dbReference type="Ensembl" id="ENST00000394106.7">
    <molecule id="Q8IZR5-2"/>
    <property type="protein sequence ID" value="ENSP00000377666.2"/>
    <property type="gene ID" value="ENSG00000183723.13"/>
</dbReference>
<dbReference type="Ensembl" id="ENST00000563952.1">
    <molecule id="Q8IZR5-3"/>
    <property type="protein sequence ID" value="ENSP00000456380.1"/>
    <property type="gene ID" value="ENSG00000183723.13"/>
</dbReference>
<dbReference type="GeneID" id="146223"/>
<dbReference type="KEGG" id="hsa:146223"/>
<dbReference type="MANE-Select" id="ENST00000394106.7">
    <molecule id="Q8IZR5-2"/>
    <property type="protein sequence ID" value="ENSP00000377666.2"/>
    <property type="RefSeq nucleotide sequence ID" value="NM_181521.3"/>
    <property type="RefSeq protein sequence ID" value="NP_852662.1"/>
</dbReference>
<dbReference type="UCSC" id="uc002epz.3">
    <molecule id="Q8IZR5-1"/>
    <property type="organism name" value="human"/>
</dbReference>
<dbReference type="AGR" id="HGNC:19175"/>
<dbReference type="CTD" id="146223"/>
<dbReference type="DisGeNET" id="146223"/>
<dbReference type="GeneCards" id="CMTM4"/>
<dbReference type="HGNC" id="HGNC:19175">
    <property type="gene designation" value="CMTM4"/>
</dbReference>
<dbReference type="HPA" id="ENSG00000183723">
    <property type="expression patterns" value="Low tissue specificity"/>
</dbReference>
<dbReference type="MIM" id="607887">
    <property type="type" value="gene"/>
</dbReference>
<dbReference type="neXtProt" id="NX_Q8IZR5"/>
<dbReference type="OpenTargets" id="ENSG00000183723"/>
<dbReference type="PharmGKB" id="PA38814"/>
<dbReference type="VEuPathDB" id="HostDB:ENSG00000183723"/>
<dbReference type="eggNOG" id="KOG4788">
    <property type="taxonomic scope" value="Eukaryota"/>
</dbReference>
<dbReference type="GeneTree" id="ENSGT00940000159573"/>
<dbReference type="HOGENOM" id="CLU_104458_0_0_1"/>
<dbReference type="InParanoid" id="Q8IZR5"/>
<dbReference type="OMA" id="NHKKGAE"/>
<dbReference type="OrthoDB" id="10028364at2759"/>
<dbReference type="PAN-GO" id="Q8IZR5">
    <property type="GO annotations" value="1 GO annotation based on evolutionary models"/>
</dbReference>
<dbReference type="PhylomeDB" id="Q8IZR5"/>
<dbReference type="TreeFam" id="TF317387"/>
<dbReference type="PathwayCommons" id="Q8IZR5"/>
<dbReference type="SignaLink" id="Q8IZR5"/>
<dbReference type="SIGNOR" id="Q8IZR5"/>
<dbReference type="BioGRID-ORCS" id="146223">
    <property type="hits" value="15 hits in 1154 CRISPR screens"/>
</dbReference>
<dbReference type="ChiTaRS" id="CMTM4">
    <property type="organism name" value="human"/>
</dbReference>
<dbReference type="GenomeRNAi" id="146223"/>
<dbReference type="Pharos" id="Q8IZR5">
    <property type="development level" value="Tbio"/>
</dbReference>
<dbReference type="PRO" id="PR:Q8IZR5"/>
<dbReference type="Proteomes" id="UP000005640">
    <property type="component" value="Chromosome 16"/>
</dbReference>
<dbReference type="RNAct" id="Q8IZR5">
    <property type="molecule type" value="protein"/>
</dbReference>
<dbReference type="Bgee" id="ENSG00000183723">
    <property type="expression patterns" value="Expressed in secondary oocyte and 189 other cell types or tissues"/>
</dbReference>
<dbReference type="ExpressionAtlas" id="Q8IZR5">
    <property type="expression patterns" value="baseline and differential"/>
</dbReference>
<dbReference type="GO" id="GO:0016020">
    <property type="term" value="C:membrane"/>
    <property type="evidence" value="ECO:0000318"/>
    <property type="project" value="GO_Central"/>
</dbReference>
<dbReference type="InterPro" id="IPR008253">
    <property type="entry name" value="Marvel"/>
</dbReference>
<dbReference type="InterPro" id="IPR050578">
    <property type="entry name" value="MARVEL-CKLF_proteins"/>
</dbReference>
<dbReference type="PANTHER" id="PTHR22776:SF29">
    <property type="entry name" value="CKLF-LIKE MARVEL TRANSMEMBRANE DOMAIN-CONTAINING PROTEIN 4"/>
    <property type="match status" value="1"/>
</dbReference>
<dbReference type="PANTHER" id="PTHR22776">
    <property type="entry name" value="MARVEL-CONTAINING POTENTIAL LIPID RAFT-ASSOCIATED PROTEIN"/>
    <property type="match status" value="1"/>
</dbReference>
<dbReference type="Pfam" id="PF01284">
    <property type="entry name" value="MARVEL"/>
    <property type="match status" value="1"/>
</dbReference>
<dbReference type="PROSITE" id="PS51225">
    <property type="entry name" value="MARVEL"/>
    <property type="match status" value="1"/>
</dbReference>
<gene>
    <name evidence="10" type="primary">CMTM4</name>
    <name type="synonym">CKLFSF4</name>
</gene>
<keyword id="KW-0025">Alternative splicing</keyword>
<keyword id="KW-0472">Membrane</keyword>
<keyword id="KW-0597">Phosphoprotein</keyword>
<keyword id="KW-1267">Proteomics identification</keyword>
<keyword id="KW-1185">Reference proteome</keyword>
<keyword id="KW-0812">Transmembrane</keyword>
<keyword id="KW-1133">Transmembrane helix</keyword>
<reference key="1">
    <citation type="submission" date="2002-06" db="EMBL/GenBank/DDBJ databases">
        <authorList>
            <person name="Ding P."/>
            <person name="Han W."/>
            <person name="Shi S."/>
            <person name="Yang T."/>
            <person name="Song Q."/>
            <person name="Zhang Y."/>
            <person name="Ma D."/>
        </authorList>
    </citation>
    <scope>NUCLEOTIDE SEQUENCE [MRNA] (ISOFORMS 1 AND 3)</scope>
    <source>
        <tissue>Kidney</tissue>
    </source>
</reference>
<reference key="2">
    <citation type="journal article" date="2003" name="Genomics">
        <title>Identification of eight genes encoding chemokine-like factor superfamily members 1-8 (CKLFSF1-8) by in silico cloning and experimental validation.</title>
        <authorList>
            <person name="Han W."/>
            <person name="Ding P."/>
            <person name="Xu M."/>
            <person name="Wang L."/>
            <person name="Rui M."/>
            <person name="Shi S."/>
            <person name="Liu Y."/>
            <person name="Zheng Y."/>
            <person name="Chen Y."/>
            <person name="Yang T."/>
            <person name="Ma D."/>
        </authorList>
    </citation>
    <scope>NUCLEOTIDE SEQUENCE [MRNA] (ISOFORM 2)</scope>
    <scope>TISSUE SPECIFICITY</scope>
    <source>
        <tissue>Spleen</tissue>
    </source>
</reference>
<reference key="3">
    <citation type="journal article" date="2004" name="Genome Res.">
        <title>The status, quality, and expansion of the NIH full-length cDNA project: the Mammalian Gene Collection (MGC).</title>
        <authorList>
            <consortium name="The MGC Project Team"/>
        </authorList>
    </citation>
    <scope>NUCLEOTIDE SEQUENCE [LARGE SCALE MRNA] (ISOFORM 2)</scope>
    <source>
        <tissue>Liver</tissue>
    </source>
</reference>
<reference key="4">
    <citation type="journal article" date="2011" name="BMC Syst. Biol.">
        <title>Initial characterization of the human central proteome.</title>
        <authorList>
            <person name="Burkard T.R."/>
            <person name="Planyavsky M."/>
            <person name="Kaupe I."/>
            <person name="Breitwieser F.P."/>
            <person name="Buerckstuemmer T."/>
            <person name="Bennett K.L."/>
            <person name="Superti-Furga G."/>
            <person name="Colinge J."/>
        </authorList>
    </citation>
    <scope>IDENTIFICATION BY MASS SPECTROMETRY [LARGE SCALE ANALYSIS]</scope>
</reference>
<reference key="5">
    <citation type="journal article" date="2013" name="J. Proteome Res.">
        <title>Toward a comprehensive characterization of a human cancer cell phosphoproteome.</title>
        <authorList>
            <person name="Zhou H."/>
            <person name="Di Palma S."/>
            <person name="Preisinger C."/>
            <person name="Peng M."/>
            <person name="Polat A.N."/>
            <person name="Heck A.J."/>
            <person name="Mohammed S."/>
        </authorList>
    </citation>
    <scope>PHOSPHORYLATION [LARGE SCALE ANALYSIS] AT SER-194</scope>
    <scope>IDENTIFICATION BY MASS SPECTROMETRY [LARGE SCALE ANALYSIS]</scope>
    <source>
        <tissue>Cervix carcinoma</tissue>
        <tissue>Erythroleukemia</tissue>
    </source>
</reference>
<reference key="6">
    <citation type="journal article" date="2017" name="Nature">
        <title>Identification of CMTM6 and CMTM4 as PD-L1 protein regulators.</title>
        <authorList>
            <person name="Mezzadra R."/>
            <person name="Sun C."/>
            <person name="Jae L.T."/>
            <person name="Gomez-Eerland R."/>
            <person name="de Vries E."/>
            <person name="Wu W."/>
            <person name="Logtenberg M.E.W."/>
            <person name="Slagter M."/>
            <person name="Rozeman E.A."/>
            <person name="Hofland I."/>
            <person name="Broeks A."/>
            <person name="Horlings H.M."/>
            <person name="Wessels L.F.A."/>
            <person name="Blank C.U."/>
            <person name="Xiao Y."/>
            <person name="Heck A.J.R."/>
            <person name="Borst J."/>
            <person name="Brummelkamp T.R."/>
            <person name="Schumacher T.N.M."/>
        </authorList>
    </citation>
    <scope>FUNCTION</scope>
    <scope>INTERACTION WITH PD-L1/CD274 AND CMTM6</scope>
    <scope>IDENTIFICATION BY MASS SPECTROMETRY</scope>
</reference>
<proteinExistence type="evidence at protein level"/>
<comment type="function">
    <text evidence="5">Acts as a backup for CMTM6 to regulate plasma membrane expression of PD-L1/CD274, an immune inhibitory ligand critical for immune tolerance to self and antitumor immunity. May protect PD-L1/CD274 from being polyubiquitinated and targeted for degradation.</text>
</comment>
<comment type="subunit">
    <text evidence="5">Interacts with PD-L1/CD274 and CMTM6.</text>
</comment>
<comment type="interaction">
    <interactant intactId="EBI-3925367">
        <id>Q8IZR5</id>
    </interactant>
    <interactant intactId="EBI-4314282">
        <id>Q9NZQ7</id>
        <label>CD274</label>
    </interactant>
    <organismsDiffer>false</organismsDiffer>
    <experiments>3</experiments>
</comment>
<comment type="interaction">
    <interactant intactId="EBI-17278014">
        <id>Q8IZR5-2</id>
    </interactant>
    <interactant intactId="EBI-1222447">
        <id>P06727</id>
        <label>APOA4</label>
    </interactant>
    <organismsDiffer>false</organismsDiffer>
    <experiments>3</experiments>
</comment>
<comment type="interaction">
    <interactant intactId="EBI-17278014">
        <id>Q8IZR5-2</id>
    </interactant>
    <interactant intactId="EBI-745535">
        <id>Q8NI60</id>
        <label>COQ8A</label>
    </interactant>
    <organismsDiffer>false</organismsDiffer>
    <experiments>3</experiments>
</comment>
<comment type="interaction">
    <interactant intactId="EBI-17278014">
        <id>Q8IZR5-2</id>
    </interactant>
    <interactant intactId="EBI-742953">
        <id>Q9BY27</id>
        <label>DGCR6L</label>
    </interactant>
    <organismsDiffer>false</organismsDiffer>
    <experiments>3</experiments>
</comment>
<comment type="interaction">
    <interactant intactId="EBI-17278014">
        <id>Q8IZR5-2</id>
    </interactant>
    <interactant intactId="EBI-517508">
        <id>Q9NR28</id>
        <label>DIABLO</label>
    </interactant>
    <organismsDiffer>false</organismsDiffer>
    <experiments>3</experiments>
</comment>
<comment type="interaction">
    <interactant intactId="EBI-17278014">
        <id>Q8IZR5-2</id>
    </interactant>
    <interactant intactId="EBI-2685549">
        <id>C9JCN9</id>
        <label>HSBP1L1</label>
    </interactant>
    <organismsDiffer>false</organismsDiffer>
    <experiments>3</experiments>
</comment>
<comment type="interaction">
    <interactant intactId="EBI-17278014">
        <id>Q8IZR5-2</id>
    </interactant>
    <interactant intactId="EBI-7153979">
        <id>Q504T8</id>
        <label>MIDN</label>
    </interactant>
    <organismsDiffer>false</organismsDiffer>
    <experiments>3</experiments>
</comment>
<comment type="interaction">
    <interactant intactId="EBI-17278014">
        <id>Q8IZR5-2</id>
    </interactant>
    <interactant intactId="EBI-741171">
        <id>Q96AL5</id>
        <label>PBX3</label>
    </interactant>
    <organismsDiffer>false</organismsDiffer>
    <experiments>3</experiments>
</comment>
<comment type="interaction">
    <interactant intactId="EBI-17278014">
        <id>Q8IZR5-2</id>
    </interactant>
    <interactant intactId="EBI-742898">
        <id>P43378</id>
        <label>PTPN9</label>
    </interactant>
    <organismsDiffer>false</organismsDiffer>
    <experiments>3</experiments>
</comment>
<comment type="interaction">
    <interactant intactId="EBI-17278014">
        <id>Q8IZR5-2</id>
    </interactant>
    <interactant intactId="EBI-2872322">
        <id>Q9H0W8</id>
        <label>SMG9</label>
    </interactant>
    <organismsDiffer>false</organismsDiffer>
    <experiments>3</experiments>
</comment>
<comment type="interaction">
    <interactant intactId="EBI-17278014">
        <id>Q8IZR5-2</id>
    </interactant>
    <interactant intactId="EBI-2822329">
        <id>Q13596</id>
        <label>SNX1</label>
    </interactant>
    <organismsDiffer>false</organismsDiffer>
    <experiments>3</experiments>
</comment>
<comment type="interaction">
    <interactant intactId="EBI-17278014">
        <id>Q8IZR5-2</id>
    </interactant>
    <interactant intactId="EBI-742688">
        <id>Q9NZD8</id>
        <label>SPG21</label>
    </interactant>
    <organismsDiffer>false</organismsDiffer>
    <experiments>3</experiments>
</comment>
<comment type="interaction">
    <interactant intactId="EBI-17278014">
        <id>Q8IZR5-2</id>
    </interactant>
    <interactant intactId="EBI-10295431">
        <id>Q99909</id>
        <label>SSX3</label>
    </interactant>
    <organismsDiffer>false</organismsDiffer>
    <experiments>3</experiments>
</comment>
<comment type="interaction">
    <interactant intactId="EBI-17278014">
        <id>Q8IZR5-2</id>
    </interactant>
    <interactant intactId="EBI-722932">
        <id>P49675</id>
        <label>STAR</label>
    </interactant>
    <organismsDiffer>false</organismsDiffer>
    <experiments>3</experiments>
</comment>
<comment type="interaction">
    <interactant intactId="EBI-17278014">
        <id>Q8IZR5-2</id>
    </interactant>
    <interactant intactId="EBI-702328">
        <id>Q969Z0</id>
        <label>TBRG4</label>
    </interactant>
    <organismsDiffer>false</organismsDiffer>
    <experiments>3</experiments>
</comment>
<comment type="interaction">
    <interactant intactId="EBI-17278014">
        <id>Q8IZR5-2</id>
    </interactant>
    <interactant intactId="EBI-710310">
        <id>Q15560</id>
        <label>TCEA2</label>
    </interactant>
    <organismsDiffer>false</organismsDiffer>
    <experiments>3</experiments>
</comment>
<comment type="interaction">
    <interactant intactId="EBI-17278014">
        <id>Q8IZR5-2</id>
    </interactant>
    <interactant intactId="EBI-10210710">
        <id>P49638</id>
        <label>TTPA</label>
    </interactant>
    <organismsDiffer>false</organismsDiffer>
    <experiments>3</experiments>
</comment>
<comment type="interaction">
    <interactant intactId="EBI-17278014">
        <id>Q8IZR5-2</id>
    </interactant>
    <interactant intactId="EBI-2849569">
        <id>Q9BQ24</id>
        <label>ZFYVE21</label>
    </interactant>
    <organismsDiffer>false</organismsDiffer>
    <experiments>3</experiments>
</comment>
<comment type="subcellular location">
    <subcellularLocation>
        <location evidence="1">Membrane</location>
        <topology evidence="1">Multi-pass membrane protein</topology>
    </subcellularLocation>
</comment>
<comment type="alternative products">
    <event type="alternative splicing"/>
    <isoform>
        <id>Q8IZR5-1</id>
        <name>1</name>
        <sequence type="displayed"/>
    </isoform>
    <isoform>
        <id>Q8IZR5-2</id>
        <name>2</name>
        <sequence type="described" ref="VSP_008261"/>
    </isoform>
    <isoform>
        <id>Q8IZR5-3</id>
        <name>3</name>
        <sequence type="described" ref="VSP_008260 VSP_008261"/>
    </isoform>
</comment>
<comment type="tissue specificity">
    <text evidence="4">Highly expressed in testis and prostate.</text>
</comment>
<comment type="similarity">
    <text evidence="9">Belongs to the chemokine-like factor family.</text>
</comment>
<organism>
    <name type="scientific">Homo sapiens</name>
    <name type="common">Human</name>
    <dbReference type="NCBI Taxonomy" id="9606"/>
    <lineage>
        <taxon>Eukaryota</taxon>
        <taxon>Metazoa</taxon>
        <taxon>Chordata</taxon>
        <taxon>Craniata</taxon>
        <taxon>Vertebrata</taxon>
        <taxon>Euteleostomi</taxon>
        <taxon>Mammalia</taxon>
        <taxon>Eutheria</taxon>
        <taxon>Euarchontoglires</taxon>
        <taxon>Primates</taxon>
        <taxon>Haplorrhini</taxon>
        <taxon>Catarrhini</taxon>
        <taxon>Hominidae</taxon>
        <taxon>Homo</taxon>
    </lineage>
</organism>
<name>CKLF4_HUMAN</name>
<sequence length="234" mass="25828">MRSGEELDGFEGEASSTSMISGASSPYQPTTEPVSQRRGLAGLRCDPDYLRGALGRLKVAQVILALIAFICIETIMACSPCEGLYFFEFVSCSAFVVTGVLLIMFSLNLHMRIPQINWNLTDLVNTGLSAFLFFIASIVLAALNHRAGAEIAAVIFGFLATAAYAVNTFLAVQKWRVSVRQQSTNDYIRARTESRDVDSRPEIQRLDTFSYSTNVTVRKKSPTNLLSLNHWQLA</sequence>